<gene>
    <name type="primary">OPG037</name>
    <name type="synonym">M1L</name>
    <name type="synonym">O1L</name>
</gene>
<comment type="function">
    <text evidence="1">Inhibits host apoptosis. Acts by associating with host apoptosome.</text>
</comment>
<comment type="subunit">
    <text evidence="1">May interact with host caspase-9-Apaf-1 complex.</text>
</comment>
<comment type="subcellular location">
    <subcellularLocation>
        <location evidence="1">Host cytoplasm</location>
    </subcellularLocation>
</comment>
<comment type="induction">
    <text evidence="1">Expressed in the early phase of the viral replicative cycle.</text>
</comment>
<comment type="similarity">
    <text evidence="2">Belongs to the orthopoxvirus OPG037 protein family.</text>
</comment>
<comment type="sequence caution" evidence="2">
    <conflict type="erroneous initiation">
        <sequence resource="EMBL-CDS" id="CAA48959"/>
    </conflict>
</comment>
<name>PG037_VAR67</name>
<organism>
    <name type="scientific">Variola virus (isolate Human/India/Ind3/1967)</name>
    <name type="common">VARV</name>
    <name type="synonym">Smallpox virus</name>
    <dbReference type="NCBI Taxonomy" id="587200"/>
    <lineage>
        <taxon>Viruses</taxon>
        <taxon>Varidnaviria</taxon>
        <taxon>Bamfordvirae</taxon>
        <taxon>Nucleocytoviricota</taxon>
        <taxon>Pokkesviricetes</taxon>
        <taxon>Chitovirales</taxon>
        <taxon>Poxviridae</taxon>
        <taxon>Chordopoxvirinae</taxon>
        <taxon>Orthopoxvirus</taxon>
        <taxon>Variola virus</taxon>
    </lineage>
</organism>
<feature type="chain" id="PRO_0000067100" description="Inhibitor of Apoptosis OPG037">
    <location>
        <begin position="1"/>
        <end position="446"/>
    </location>
</feature>
<feature type="repeat" description="ANK 1">
    <location>
        <begin position="71"/>
        <end position="100"/>
    </location>
</feature>
<feature type="repeat" description="ANK 2">
    <location>
        <begin position="104"/>
        <end position="135"/>
    </location>
</feature>
<feature type="repeat" description="ANK 3">
    <location>
        <begin position="207"/>
        <end position="237"/>
    </location>
</feature>
<feature type="repeat" description="ANK 4">
    <location>
        <begin position="241"/>
        <end position="271"/>
    </location>
</feature>
<feature type="repeat" description="ANK 5">
    <location>
        <begin position="296"/>
        <end position="325"/>
    </location>
</feature>
<feature type="repeat" description="ANK 6">
    <location>
        <begin position="327"/>
        <end position="351"/>
    </location>
</feature>
<keyword id="KW-0040">ANK repeat</keyword>
<keyword id="KW-0244">Early protein</keyword>
<keyword id="KW-1035">Host cytoplasm</keyword>
<keyword id="KW-0945">Host-virus interaction</keyword>
<keyword id="KW-1119">Modulation of host cell apoptosis by virus</keyword>
<keyword id="KW-1185">Reference proteome</keyword>
<keyword id="KW-0677">Repeat</keyword>
<proteinExistence type="inferred from homology"/>
<reference key="1">
    <citation type="journal article" date="1993" name="FEBS Lett.">
        <title>Genes of variola and vaccinia viruses necessary to overcome the host protective mechanisms.</title>
        <authorList>
            <person name="Shchelkunov S.N."/>
            <person name="Blinov V.M."/>
            <person name="Sandakhchiev L.S."/>
        </authorList>
    </citation>
    <scope>NUCLEOTIDE SEQUENCE [GENOMIC DNA]</scope>
</reference>
<accession>P33825</accession>
<sequence length="446" mass="50970">MDNIMSAEYYLSLYTKYNSKNLDVFRNMLQAIEPSGNYHILHAYCGIKGLDERFVEELLHRGYSPNETDDDGNYPLHIASKINNNRIVAMLLTHGADPNACDKQHKTPLYYLSGTDDEVIERINLLVQYGAKINNSVDEEGCGPLLASTDPSERVFKKIMSIGFEARIVDKFGKNHIHRHLMSDNPKASTISWMMKLGISPSKPDHDGNTPLHIVCSKTVKNVDIINLLLPSTDVNKQNKFGDSPLTLLIKTLSPAHLINKLLSTSNVITDQTVNICIFYDRDDILEIINDKGKQYDSTDFKMAVEVGSIRCIKYLLDNDIICEDAMYYAVLSEYETMVDYLLFNHFSVDSVVNGNTCMSECVRLNNPVILSKLMLHNPTSETMYLTMKAIEKDKLDKSIIIPFIAYFVLMHPDFCKNRRYFTSYKRFVTDYVHEGVSYKVFDDYF</sequence>
<organismHost>
    <name type="scientific">Homo sapiens</name>
    <name type="common">Human</name>
    <dbReference type="NCBI Taxonomy" id="9606"/>
</organismHost>
<protein>
    <recommendedName>
        <fullName>Inhibitor of Apoptosis OPG037</fullName>
    </recommendedName>
    <alternativeName>
        <fullName>Ankyrin repeat protein M1</fullName>
    </alternativeName>
</protein>
<dbReference type="EMBL" id="X69198">
    <property type="protein sequence ID" value="CAA48959.1"/>
    <property type="status" value="ALT_INIT"/>
    <property type="molecule type" value="Genomic_DNA"/>
</dbReference>
<dbReference type="RefSeq" id="NP_042062.1">
    <property type="nucleotide sequence ID" value="NC_001611.1"/>
</dbReference>
<dbReference type="SMR" id="P33825"/>
<dbReference type="GeneID" id="1486478"/>
<dbReference type="KEGG" id="vg:1486478"/>
<dbReference type="Proteomes" id="UP000002060">
    <property type="component" value="Segment"/>
</dbReference>
<dbReference type="GO" id="GO:0030430">
    <property type="term" value="C:host cell cytoplasm"/>
    <property type="evidence" value="ECO:0007669"/>
    <property type="project" value="UniProtKB-SubCell"/>
</dbReference>
<dbReference type="GO" id="GO:0052150">
    <property type="term" value="P:symbiont-mediated perturbation of host apoptosis"/>
    <property type="evidence" value="ECO:0007669"/>
    <property type="project" value="UniProtKB-KW"/>
</dbReference>
<dbReference type="Gene3D" id="1.25.40.20">
    <property type="entry name" value="Ankyrin repeat-containing domain"/>
    <property type="match status" value="2"/>
</dbReference>
<dbReference type="InterPro" id="IPR002110">
    <property type="entry name" value="Ankyrin_rpt"/>
</dbReference>
<dbReference type="InterPro" id="IPR036770">
    <property type="entry name" value="Ankyrin_rpt-contain_sf"/>
</dbReference>
<dbReference type="PANTHER" id="PTHR24198">
    <property type="entry name" value="ANKYRIN REPEAT AND PROTEIN KINASE DOMAIN-CONTAINING PROTEIN"/>
    <property type="match status" value="1"/>
</dbReference>
<dbReference type="PANTHER" id="PTHR24198:SF165">
    <property type="entry name" value="ANKYRIN REPEAT-CONTAINING PROTEIN-RELATED"/>
    <property type="match status" value="1"/>
</dbReference>
<dbReference type="Pfam" id="PF00023">
    <property type="entry name" value="Ank"/>
    <property type="match status" value="1"/>
</dbReference>
<dbReference type="Pfam" id="PF12796">
    <property type="entry name" value="Ank_2"/>
    <property type="match status" value="1"/>
</dbReference>
<dbReference type="SMART" id="SM00248">
    <property type="entry name" value="ANK"/>
    <property type="match status" value="7"/>
</dbReference>
<dbReference type="SUPFAM" id="SSF48403">
    <property type="entry name" value="Ankyrin repeat"/>
    <property type="match status" value="2"/>
</dbReference>
<dbReference type="PROSITE" id="PS50297">
    <property type="entry name" value="ANK_REP_REGION"/>
    <property type="match status" value="1"/>
</dbReference>
<dbReference type="PROSITE" id="PS50088">
    <property type="entry name" value="ANK_REPEAT"/>
    <property type="match status" value="1"/>
</dbReference>
<evidence type="ECO:0000250" key="1">
    <source>
        <dbReference type="UniProtKB" id="P14356"/>
    </source>
</evidence>
<evidence type="ECO:0000305" key="2"/>